<keyword id="KW-0274">FAD</keyword>
<keyword id="KW-0285">Flavoprotein</keyword>
<keyword id="KW-0560">Oxidoreductase</keyword>
<keyword id="KW-1185">Reference proteome</keyword>
<keyword id="KW-0816">Tricarboxylic acid cycle</keyword>
<reference key="1">
    <citation type="journal article" date="1999" name="Extremophiles">
        <title>An improved physical and genetic map of the genome of alkaliphilic Bacillus sp. C-125.</title>
        <authorList>
            <person name="Takami H."/>
            <person name="Nakasone K."/>
            <person name="Hirama C."/>
            <person name="Takaki Y."/>
            <person name="Masui N."/>
            <person name="Fuji F."/>
            <person name="Nakamura Y."/>
            <person name="Inoue A."/>
        </authorList>
    </citation>
    <scope>NUCLEOTIDE SEQUENCE [GENOMIC DNA]</scope>
    <source>
        <strain>ATCC BAA-125 / DSM 18197 / FERM 7344 / JCM 9153 / C-125</strain>
    </source>
</reference>
<reference key="2">
    <citation type="journal article" date="2000" name="Nucleic Acids Res.">
        <title>Complete genome sequence of the alkaliphilic bacterium Bacillus halodurans and genomic sequence comparison with Bacillus subtilis.</title>
        <authorList>
            <person name="Takami H."/>
            <person name="Nakasone K."/>
            <person name="Takaki Y."/>
            <person name="Maeno G."/>
            <person name="Sasaki R."/>
            <person name="Masui N."/>
            <person name="Fuji F."/>
            <person name="Hirama C."/>
            <person name="Nakamura Y."/>
            <person name="Ogasawara N."/>
            <person name="Kuhara S."/>
            <person name="Horikoshi K."/>
        </authorList>
    </citation>
    <scope>NUCLEOTIDE SEQUENCE [LARGE SCALE GENOMIC DNA]</scope>
    <source>
        <strain>ATCC BAA-125 / DSM 18197 / FERM 7344 / JCM 9153 / C-125</strain>
    </source>
</reference>
<feature type="chain" id="PRO_0000128706" description="Probable malate:quinone oxidoreductase">
    <location>
        <begin position="1"/>
        <end position="500"/>
    </location>
</feature>
<protein>
    <recommendedName>
        <fullName evidence="1">Probable malate:quinone oxidoreductase</fullName>
        <ecNumber evidence="1">1.1.5.4</ecNumber>
    </recommendedName>
    <alternativeName>
        <fullName evidence="1">MQO</fullName>
    </alternativeName>
    <alternativeName>
        <fullName evidence="1">Malate dehydrogenase [quinone]</fullName>
    </alternativeName>
</protein>
<proteinExistence type="inferred from homology"/>
<gene>
    <name evidence="1" type="primary">mqo</name>
    <name type="ordered locus">BH3960</name>
</gene>
<organism>
    <name type="scientific">Halalkalibacterium halodurans (strain ATCC BAA-125 / DSM 18197 / FERM 7344 / JCM 9153 / C-125)</name>
    <name type="common">Bacillus halodurans</name>
    <dbReference type="NCBI Taxonomy" id="272558"/>
    <lineage>
        <taxon>Bacteria</taxon>
        <taxon>Bacillati</taxon>
        <taxon>Bacillota</taxon>
        <taxon>Bacilli</taxon>
        <taxon>Bacillales</taxon>
        <taxon>Bacillaceae</taxon>
        <taxon>Halalkalibacterium (ex Joshi et al. 2022)</taxon>
    </lineage>
</organism>
<accession>Q9Z9Q7</accession>
<comment type="catalytic activity">
    <reaction evidence="1">
        <text>(S)-malate + a quinone = a quinol + oxaloacetate</text>
        <dbReference type="Rhea" id="RHEA:46012"/>
        <dbReference type="ChEBI" id="CHEBI:15589"/>
        <dbReference type="ChEBI" id="CHEBI:16452"/>
        <dbReference type="ChEBI" id="CHEBI:24646"/>
        <dbReference type="ChEBI" id="CHEBI:132124"/>
        <dbReference type="EC" id="1.1.5.4"/>
    </reaction>
</comment>
<comment type="cofactor">
    <cofactor evidence="1">
        <name>FAD</name>
        <dbReference type="ChEBI" id="CHEBI:57692"/>
    </cofactor>
</comment>
<comment type="pathway">
    <text evidence="1">Carbohydrate metabolism; tricarboxylic acid cycle; oxaloacetate from (S)-malate (quinone route): step 1/1.</text>
</comment>
<comment type="similarity">
    <text evidence="1">Belongs to the MQO family.</text>
</comment>
<evidence type="ECO:0000255" key="1">
    <source>
        <dbReference type="HAMAP-Rule" id="MF_00212"/>
    </source>
</evidence>
<name>MQO_HALH5</name>
<dbReference type="EC" id="1.1.5.4" evidence="1"/>
<dbReference type="EMBL" id="AB013369">
    <property type="protein sequence ID" value="BAA75375.1"/>
    <property type="molecule type" value="Genomic_DNA"/>
</dbReference>
<dbReference type="EMBL" id="BA000004">
    <property type="protein sequence ID" value="BAB07679.1"/>
    <property type="molecule type" value="Genomic_DNA"/>
</dbReference>
<dbReference type="PIR" id="T44345">
    <property type="entry name" value="T44345"/>
</dbReference>
<dbReference type="RefSeq" id="WP_010900084.1">
    <property type="nucleotide sequence ID" value="NC_002570.2"/>
</dbReference>
<dbReference type="SMR" id="Q9Z9Q7"/>
<dbReference type="STRING" id="272558.gene:10729873"/>
<dbReference type="GeneID" id="87599509"/>
<dbReference type="KEGG" id="bha:BH3960"/>
<dbReference type="eggNOG" id="COG0579">
    <property type="taxonomic scope" value="Bacteria"/>
</dbReference>
<dbReference type="HOGENOM" id="CLU_028151_0_0_9"/>
<dbReference type="OrthoDB" id="9763983at2"/>
<dbReference type="UniPathway" id="UPA00223">
    <property type="reaction ID" value="UER01008"/>
</dbReference>
<dbReference type="Proteomes" id="UP000001258">
    <property type="component" value="Chromosome"/>
</dbReference>
<dbReference type="GO" id="GO:0047545">
    <property type="term" value="F:2-hydroxyglutarate dehydrogenase activity"/>
    <property type="evidence" value="ECO:0007669"/>
    <property type="project" value="TreeGrafter"/>
</dbReference>
<dbReference type="GO" id="GO:0008924">
    <property type="term" value="F:L-malate dehydrogenase (quinone) activity"/>
    <property type="evidence" value="ECO:0007669"/>
    <property type="project" value="UniProtKB-UniRule"/>
</dbReference>
<dbReference type="GO" id="GO:0006099">
    <property type="term" value="P:tricarboxylic acid cycle"/>
    <property type="evidence" value="ECO:0007669"/>
    <property type="project" value="UniProtKB-UniRule"/>
</dbReference>
<dbReference type="Gene3D" id="3.30.9.10">
    <property type="entry name" value="D-Amino Acid Oxidase, subunit A, domain 2"/>
    <property type="match status" value="1"/>
</dbReference>
<dbReference type="Gene3D" id="3.50.50.60">
    <property type="entry name" value="FAD/NAD(P)-binding domain"/>
    <property type="match status" value="1"/>
</dbReference>
<dbReference type="HAMAP" id="MF_00212">
    <property type="entry name" value="MQO"/>
    <property type="match status" value="1"/>
</dbReference>
<dbReference type="InterPro" id="IPR036188">
    <property type="entry name" value="FAD/NAD-bd_sf"/>
</dbReference>
<dbReference type="InterPro" id="IPR006231">
    <property type="entry name" value="MQO"/>
</dbReference>
<dbReference type="NCBIfam" id="TIGR01320">
    <property type="entry name" value="mal_quin_oxido"/>
    <property type="match status" value="1"/>
</dbReference>
<dbReference type="NCBIfam" id="NF003603">
    <property type="entry name" value="PRK05257.1-1"/>
    <property type="match status" value="1"/>
</dbReference>
<dbReference type="NCBIfam" id="NF003604">
    <property type="entry name" value="PRK05257.1-3"/>
    <property type="match status" value="1"/>
</dbReference>
<dbReference type="NCBIfam" id="NF003605">
    <property type="entry name" value="PRK05257.1-4"/>
    <property type="match status" value="1"/>
</dbReference>
<dbReference type="NCBIfam" id="NF003606">
    <property type="entry name" value="PRK05257.2-1"/>
    <property type="match status" value="1"/>
</dbReference>
<dbReference type="NCBIfam" id="NF003608">
    <property type="entry name" value="PRK05257.2-4"/>
    <property type="match status" value="1"/>
</dbReference>
<dbReference type="NCBIfam" id="NF003610">
    <property type="entry name" value="PRK05257.3-1"/>
    <property type="match status" value="1"/>
</dbReference>
<dbReference type="NCBIfam" id="NF003611">
    <property type="entry name" value="PRK05257.3-2"/>
    <property type="match status" value="1"/>
</dbReference>
<dbReference type="NCBIfam" id="NF009875">
    <property type="entry name" value="PRK13339.1"/>
    <property type="match status" value="1"/>
</dbReference>
<dbReference type="PANTHER" id="PTHR43104">
    <property type="entry name" value="L-2-HYDROXYGLUTARATE DEHYDROGENASE, MITOCHONDRIAL"/>
    <property type="match status" value="1"/>
</dbReference>
<dbReference type="PANTHER" id="PTHR43104:SF2">
    <property type="entry name" value="L-2-HYDROXYGLUTARATE DEHYDROGENASE, MITOCHONDRIAL"/>
    <property type="match status" value="1"/>
</dbReference>
<dbReference type="Pfam" id="PF06039">
    <property type="entry name" value="Mqo"/>
    <property type="match status" value="1"/>
</dbReference>
<dbReference type="SUPFAM" id="SSF51905">
    <property type="entry name" value="FAD/NAD(P)-binding domain"/>
    <property type="match status" value="1"/>
</dbReference>
<sequence>MSSIQNKTDVILIGAGIMSATLGSLLKELKPEWEIKVFEKLANAGEESSNEWNNAGTGHAALCELNYTAEKSDGTIDISKAVKINEQFQISRQFWAYLVSQNLISNPQDFIMPIPHMSLVQGEDNVAYLKKRFKALSNIPLFEGMEFSNDPEKLKEWIPLVMEGRTSNEPIAATKIDSGTDVNFGALTRMLFEHLKEQNVEVHYKHSVKDIKRTSDGSWSVKVQEIESGTIEYHTANFVFIGGGGGSLPLLQKTGIPESKNIGGFPVSGLFMVCNNPEVVEQHHAKVYGKAKVGAPPMSVPHLDTRYIDNKKSLLFGPFAGFSPKFLKTGSNFDLIGSVKPYNVFTMLAAGAKEMSLTKYLIQQVMLSKEKRMAELREFMPNAKSEDWDIVVAGQRVQVIKDTEAGGKGTLQFGTEVVSSADGSIAALLGASPGASTAVHVMLEVLEKCFPHHMLEWQPKIKEMIPSYGVSLAENRELFQEIHQSTAEALGLSEKELVHS</sequence>